<keyword id="KW-0963">Cytoplasm</keyword>
<keyword id="KW-0324">Glycolysis</keyword>
<keyword id="KW-0520">NAD</keyword>
<keyword id="KW-0521">NADP</keyword>
<keyword id="KW-0560">Oxidoreductase</keyword>
<accession>B1YD06</accession>
<comment type="catalytic activity">
    <reaction evidence="1">
        <text>D-glyceraldehyde 3-phosphate + phosphate + NADP(+) = (2R)-3-phospho-glyceroyl phosphate + NADPH + H(+)</text>
        <dbReference type="Rhea" id="RHEA:10296"/>
        <dbReference type="ChEBI" id="CHEBI:15378"/>
        <dbReference type="ChEBI" id="CHEBI:43474"/>
        <dbReference type="ChEBI" id="CHEBI:57604"/>
        <dbReference type="ChEBI" id="CHEBI:57783"/>
        <dbReference type="ChEBI" id="CHEBI:58349"/>
        <dbReference type="ChEBI" id="CHEBI:59776"/>
        <dbReference type="EC" id="1.2.1.59"/>
    </reaction>
</comment>
<comment type="catalytic activity">
    <reaction evidence="1">
        <text>D-glyceraldehyde 3-phosphate + phosphate + NAD(+) = (2R)-3-phospho-glyceroyl phosphate + NADH + H(+)</text>
        <dbReference type="Rhea" id="RHEA:10300"/>
        <dbReference type="ChEBI" id="CHEBI:15378"/>
        <dbReference type="ChEBI" id="CHEBI:43474"/>
        <dbReference type="ChEBI" id="CHEBI:57540"/>
        <dbReference type="ChEBI" id="CHEBI:57604"/>
        <dbReference type="ChEBI" id="CHEBI:57945"/>
        <dbReference type="ChEBI" id="CHEBI:59776"/>
        <dbReference type="EC" id="1.2.1.59"/>
    </reaction>
</comment>
<comment type="pathway">
    <text evidence="1">Carbohydrate degradation; glycolysis; pyruvate from D-glyceraldehyde 3-phosphate: step 1/5.</text>
</comment>
<comment type="subunit">
    <text evidence="1">Homotetramer.</text>
</comment>
<comment type="subcellular location">
    <subcellularLocation>
        <location evidence="1">Cytoplasm</location>
    </subcellularLocation>
</comment>
<comment type="similarity">
    <text evidence="1">Belongs to the glyceraldehyde-3-phosphate dehydrogenase family.</text>
</comment>
<proteinExistence type="inferred from homology"/>
<reference key="1">
    <citation type="submission" date="2008-03" db="EMBL/GenBank/DDBJ databases">
        <title>Complete sequence of Thermoproteus neutrophilus V24Sta.</title>
        <authorList>
            <consortium name="US DOE Joint Genome Institute"/>
            <person name="Copeland A."/>
            <person name="Lucas S."/>
            <person name="Lapidus A."/>
            <person name="Glavina del Rio T."/>
            <person name="Dalin E."/>
            <person name="Tice H."/>
            <person name="Bruce D."/>
            <person name="Goodwin L."/>
            <person name="Pitluck S."/>
            <person name="Sims D."/>
            <person name="Brettin T."/>
            <person name="Detter J.C."/>
            <person name="Han C."/>
            <person name="Kuske C.R."/>
            <person name="Schmutz J."/>
            <person name="Larimer F."/>
            <person name="Land M."/>
            <person name="Hauser L."/>
            <person name="Kyrpides N."/>
            <person name="Mikhailova N."/>
            <person name="Biddle J.F."/>
            <person name="Zhang Z."/>
            <person name="Fitz-Gibbon S.T."/>
            <person name="Lowe T.M."/>
            <person name="Saltikov C."/>
            <person name="House C.H."/>
            <person name="Richardson P."/>
        </authorList>
    </citation>
    <scope>NUCLEOTIDE SEQUENCE [LARGE SCALE GENOMIC DNA]</scope>
    <source>
        <strain>DSM 2338 / JCM 9278 / NBRC 100436 / V24Sta</strain>
    </source>
</reference>
<organism>
    <name type="scientific">Pyrobaculum neutrophilum (strain DSM 2338 / JCM 9278 / NBRC 100436 / V24Sta)</name>
    <name type="common">Thermoproteus neutrophilus</name>
    <dbReference type="NCBI Taxonomy" id="444157"/>
    <lineage>
        <taxon>Archaea</taxon>
        <taxon>Thermoproteota</taxon>
        <taxon>Thermoprotei</taxon>
        <taxon>Thermoproteales</taxon>
        <taxon>Thermoproteaceae</taxon>
        <taxon>Pyrobaculum</taxon>
    </lineage>
</organism>
<feature type="chain" id="PRO_1000129247" description="Glyceraldehyde-3-phosphate dehydrogenase">
    <location>
        <begin position="1"/>
        <end position="344"/>
    </location>
</feature>
<feature type="active site" description="Nucleophile" evidence="1">
    <location>
        <position position="140"/>
    </location>
</feature>
<feature type="binding site" evidence="1">
    <location>
        <begin position="11"/>
        <end position="12"/>
    </location>
    <ligand>
        <name>NAD(+)</name>
        <dbReference type="ChEBI" id="CHEBI:57540"/>
    </ligand>
</feature>
<feature type="binding site" evidence="1">
    <location>
        <position position="110"/>
    </location>
    <ligand>
        <name>NAD(+)</name>
        <dbReference type="ChEBI" id="CHEBI:57540"/>
    </ligand>
</feature>
<feature type="binding site" evidence="1">
    <location>
        <begin position="139"/>
        <end position="141"/>
    </location>
    <ligand>
        <name>D-glyceraldehyde 3-phosphate</name>
        <dbReference type="ChEBI" id="CHEBI:59776"/>
    </ligand>
</feature>
<feature type="binding site" evidence="1">
    <location>
        <position position="169"/>
    </location>
    <ligand>
        <name>NAD(+)</name>
        <dbReference type="ChEBI" id="CHEBI:57540"/>
    </ligand>
</feature>
<feature type="binding site" evidence="1">
    <location>
        <begin position="195"/>
        <end position="196"/>
    </location>
    <ligand>
        <name>D-glyceraldehyde 3-phosphate</name>
        <dbReference type="ChEBI" id="CHEBI:59776"/>
    </ligand>
</feature>
<feature type="binding site" evidence="1">
    <location>
        <position position="302"/>
    </location>
    <ligand>
        <name>NAD(+)</name>
        <dbReference type="ChEBI" id="CHEBI:57540"/>
    </ligand>
</feature>
<evidence type="ECO:0000255" key="1">
    <source>
        <dbReference type="HAMAP-Rule" id="MF_00559"/>
    </source>
</evidence>
<name>G3P_PYRNV</name>
<dbReference type="EC" id="1.2.1.59" evidence="1"/>
<dbReference type="EMBL" id="CP001014">
    <property type="protein sequence ID" value="ACB39669.1"/>
    <property type="molecule type" value="Genomic_DNA"/>
</dbReference>
<dbReference type="RefSeq" id="WP_012350089.1">
    <property type="nucleotide sequence ID" value="NC_010525.1"/>
</dbReference>
<dbReference type="SMR" id="B1YD06"/>
<dbReference type="STRING" id="444157.Tneu_0730"/>
<dbReference type="GeneID" id="6165513"/>
<dbReference type="KEGG" id="tne:Tneu_0730"/>
<dbReference type="eggNOG" id="arCOG00493">
    <property type="taxonomic scope" value="Archaea"/>
</dbReference>
<dbReference type="HOGENOM" id="CLU_069533_0_0_2"/>
<dbReference type="OrthoDB" id="295712at2157"/>
<dbReference type="UniPathway" id="UPA00109">
    <property type="reaction ID" value="UER00184"/>
</dbReference>
<dbReference type="Proteomes" id="UP000001694">
    <property type="component" value="Chromosome"/>
</dbReference>
<dbReference type="GO" id="GO:0005737">
    <property type="term" value="C:cytoplasm"/>
    <property type="evidence" value="ECO:0007669"/>
    <property type="project" value="UniProtKB-SubCell"/>
</dbReference>
<dbReference type="GO" id="GO:0008839">
    <property type="term" value="F:4-hydroxy-tetrahydrodipicolinate reductase"/>
    <property type="evidence" value="ECO:0007669"/>
    <property type="project" value="InterPro"/>
</dbReference>
<dbReference type="GO" id="GO:0004365">
    <property type="term" value="F:glyceraldehyde-3-phosphate dehydrogenase (NAD+) (phosphorylating) activity"/>
    <property type="evidence" value="ECO:0007669"/>
    <property type="project" value="UniProtKB-UniRule"/>
</dbReference>
<dbReference type="GO" id="GO:0047100">
    <property type="term" value="F:glyceraldehyde-3-phosphate dehydrogenase (NADP+) (phosphorylating) activity"/>
    <property type="evidence" value="ECO:0007669"/>
    <property type="project" value="RHEA"/>
</dbReference>
<dbReference type="GO" id="GO:0051287">
    <property type="term" value="F:NAD binding"/>
    <property type="evidence" value="ECO:0007669"/>
    <property type="project" value="InterPro"/>
</dbReference>
<dbReference type="GO" id="GO:0050661">
    <property type="term" value="F:NADP binding"/>
    <property type="evidence" value="ECO:0007669"/>
    <property type="project" value="InterPro"/>
</dbReference>
<dbReference type="GO" id="GO:0006096">
    <property type="term" value="P:glycolytic process"/>
    <property type="evidence" value="ECO:0007669"/>
    <property type="project" value="UniProtKB-UniRule"/>
</dbReference>
<dbReference type="GO" id="GO:0009089">
    <property type="term" value="P:lysine biosynthetic process via diaminopimelate"/>
    <property type="evidence" value="ECO:0007669"/>
    <property type="project" value="InterPro"/>
</dbReference>
<dbReference type="CDD" id="cd18127">
    <property type="entry name" value="GAPDH_II_C"/>
    <property type="match status" value="1"/>
</dbReference>
<dbReference type="CDD" id="cd02278">
    <property type="entry name" value="GAPDH_II_N"/>
    <property type="match status" value="1"/>
</dbReference>
<dbReference type="Gene3D" id="3.30.360.10">
    <property type="entry name" value="Dihydrodipicolinate Reductase, domain 2"/>
    <property type="match status" value="1"/>
</dbReference>
<dbReference type="Gene3D" id="3.40.50.720">
    <property type="entry name" value="NAD(P)-binding Rossmann-like Domain"/>
    <property type="match status" value="1"/>
</dbReference>
<dbReference type="HAMAP" id="MF_00559">
    <property type="entry name" value="G3P_dehdrog_arch"/>
    <property type="match status" value="1"/>
</dbReference>
<dbReference type="InterPro" id="IPR000846">
    <property type="entry name" value="DapB_N"/>
</dbReference>
<dbReference type="InterPro" id="IPR020831">
    <property type="entry name" value="GlycerAld/Erythrose_P_DH"/>
</dbReference>
<dbReference type="InterPro" id="IPR020830">
    <property type="entry name" value="GlycerAld_3-P_DH_AS"/>
</dbReference>
<dbReference type="InterPro" id="IPR020829">
    <property type="entry name" value="GlycerAld_3-P_DH_cat"/>
</dbReference>
<dbReference type="InterPro" id="IPR020828">
    <property type="entry name" value="GlycerAld_3-P_DH_NAD(P)-bd"/>
</dbReference>
<dbReference type="InterPro" id="IPR006436">
    <property type="entry name" value="Glyceraldehyde-3-P_DH_2_arc"/>
</dbReference>
<dbReference type="InterPro" id="IPR036291">
    <property type="entry name" value="NAD(P)-bd_dom_sf"/>
</dbReference>
<dbReference type="NCBIfam" id="TIGR01546">
    <property type="entry name" value="GAPDH-II_archae"/>
    <property type="match status" value="1"/>
</dbReference>
<dbReference type="NCBIfam" id="NF003251">
    <property type="entry name" value="PRK04207.1"/>
    <property type="match status" value="1"/>
</dbReference>
<dbReference type="Pfam" id="PF01113">
    <property type="entry name" value="DapB_N"/>
    <property type="match status" value="1"/>
</dbReference>
<dbReference type="Pfam" id="PF02800">
    <property type="entry name" value="Gp_dh_C"/>
    <property type="match status" value="1"/>
</dbReference>
<dbReference type="PIRSF" id="PIRSF000149">
    <property type="entry name" value="GAP_DH"/>
    <property type="match status" value="1"/>
</dbReference>
<dbReference type="SMART" id="SM00846">
    <property type="entry name" value="Gp_dh_N"/>
    <property type="match status" value="1"/>
</dbReference>
<dbReference type="SUPFAM" id="SSF55347">
    <property type="entry name" value="Glyceraldehyde-3-phosphate dehydrogenase-like, C-terminal domain"/>
    <property type="match status" value="1"/>
</dbReference>
<dbReference type="SUPFAM" id="SSF51735">
    <property type="entry name" value="NAD(P)-binding Rossmann-fold domains"/>
    <property type="match status" value="1"/>
</dbReference>
<dbReference type="PROSITE" id="PS00071">
    <property type="entry name" value="GAPDH"/>
    <property type="match status" value="1"/>
</dbReference>
<sequence>MIRVGIVGYGTIGKRIADAVVAQDDMKIAGVLKVSPDYEAKVAVSRGFPVYTLPDRVEKFKKAGIEPAGTIEDLIKASDVVVDASPEDVGRENKEKYYQRYDKPVIFQGGEEADVAEVSFNALANYEEARGKRYVRVVSCNTTGITRVLTSLTLNGVGIKKARIFIARRGADPKEHKKGPINDVVPNPATVPSHHGPDVQTILRNVDIVTMAVAVPVTIMHMHMAYIELDSAYPKDQVIEAFAKTPRIFLADVGAGFQSLAQVIEYARDLGRPRGDFPEVAVFRDSVTTHGNELYLMYGVHQESIVVPENIDAIRSIFGTLPKWRSIEKTDKSLKLTTEGKRYG</sequence>
<gene>
    <name evidence="1" type="primary">gap</name>
    <name type="ordered locus">Tneu_0730</name>
</gene>
<protein>
    <recommendedName>
        <fullName evidence="1">Glyceraldehyde-3-phosphate dehydrogenase</fullName>
        <shortName evidence="1">GAPDH</shortName>
        <ecNumber evidence="1">1.2.1.59</ecNumber>
    </recommendedName>
    <alternativeName>
        <fullName evidence="1">NAD(P)-dependent glyceraldehyde-3-phosphate dehydrogenase</fullName>
    </alternativeName>
</protein>